<dbReference type="EC" id="3.1.-.-" evidence="1"/>
<dbReference type="EMBL" id="KN275967">
    <property type="protein sequence ID" value="EEH42711.2"/>
    <property type="molecule type" value="Genomic_DNA"/>
</dbReference>
<dbReference type="RefSeq" id="XP_010762771.1">
    <property type="nucleotide sequence ID" value="XM_010764469.1"/>
</dbReference>
<dbReference type="SMR" id="C1GJU5"/>
<dbReference type="FunCoup" id="C1GJU5">
    <property type="interactions" value="365"/>
</dbReference>
<dbReference type="STRING" id="502780.C1GJU5"/>
<dbReference type="GeneID" id="22586009"/>
<dbReference type="KEGG" id="pbn:PADG_07531"/>
<dbReference type="VEuPathDB" id="FungiDB:PADG_07531"/>
<dbReference type="eggNOG" id="KOG3005">
    <property type="taxonomic scope" value="Eukaryota"/>
</dbReference>
<dbReference type="HOGENOM" id="CLU_030739_1_0_1"/>
<dbReference type="InParanoid" id="C1GJU5"/>
<dbReference type="OMA" id="HNRGCDF"/>
<dbReference type="OrthoDB" id="3594at33183"/>
<dbReference type="Proteomes" id="UP000001628">
    <property type="component" value="Unassembled WGS sequence"/>
</dbReference>
<dbReference type="GO" id="GO:0033557">
    <property type="term" value="C:Slx1-Slx4 complex"/>
    <property type="evidence" value="ECO:0007669"/>
    <property type="project" value="UniProtKB-UniRule"/>
</dbReference>
<dbReference type="GO" id="GO:0017108">
    <property type="term" value="F:5'-flap endonuclease activity"/>
    <property type="evidence" value="ECO:0007669"/>
    <property type="project" value="InterPro"/>
</dbReference>
<dbReference type="GO" id="GO:0008821">
    <property type="term" value="F:crossover junction DNA endonuclease activity"/>
    <property type="evidence" value="ECO:0007669"/>
    <property type="project" value="TreeGrafter"/>
</dbReference>
<dbReference type="GO" id="GO:0008270">
    <property type="term" value="F:zinc ion binding"/>
    <property type="evidence" value="ECO:0007669"/>
    <property type="project" value="UniProtKB-KW"/>
</dbReference>
<dbReference type="GO" id="GO:0000724">
    <property type="term" value="P:double-strand break repair via homologous recombination"/>
    <property type="evidence" value="ECO:0007669"/>
    <property type="project" value="TreeGrafter"/>
</dbReference>
<dbReference type="CDD" id="cd10455">
    <property type="entry name" value="GIY-YIG_SLX1"/>
    <property type="match status" value="1"/>
</dbReference>
<dbReference type="FunFam" id="3.40.1440.10:FF:000006">
    <property type="entry name" value="Structure-specific endonuclease subunit SLX1"/>
    <property type="match status" value="1"/>
</dbReference>
<dbReference type="Gene3D" id="3.40.1440.10">
    <property type="entry name" value="GIY-YIG endonuclease"/>
    <property type="match status" value="1"/>
</dbReference>
<dbReference type="Gene3D" id="3.30.40.10">
    <property type="entry name" value="Zinc/RING finger domain, C3HC4 (zinc finger)"/>
    <property type="match status" value="1"/>
</dbReference>
<dbReference type="HAMAP" id="MF_03100">
    <property type="entry name" value="Endonuc_su_Slx1"/>
    <property type="match status" value="1"/>
</dbReference>
<dbReference type="InterPro" id="IPR000305">
    <property type="entry name" value="GIY-YIG_endonuc"/>
</dbReference>
<dbReference type="InterPro" id="IPR035901">
    <property type="entry name" value="GIY-YIG_endonuc_sf"/>
</dbReference>
<dbReference type="InterPro" id="IPR027520">
    <property type="entry name" value="Slx1"/>
</dbReference>
<dbReference type="InterPro" id="IPR048749">
    <property type="entry name" value="SLX1_C"/>
</dbReference>
<dbReference type="InterPro" id="IPR050381">
    <property type="entry name" value="SLX1_endonuclease"/>
</dbReference>
<dbReference type="InterPro" id="IPR013083">
    <property type="entry name" value="Znf_RING/FYVE/PHD"/>
</dbReference>
<dbReference type="PANTHER" id="PTHR20208">
    <property type="entry name" value="STRUCTURE-SPECIFIC ENDONUCLEASE SUBUNIT SLX1"/>
    <property type="match status" value="1"/>
</dbReference>
<dbReference type="PANTHER" id="PTHR20208:SF10">
    <property type="entry name" value="STRUCTURE-SPECIFIC ENDONUCLEASE SUBUNIT SLX1"/>
    <property type="match status" value="1"/>
</dbReference>
<dbReference type="Pfam" id="PF01541">
    <property type="entry name" value="GIY-YIG"/>
    <property type="match status" value="1"/>
</dbReference>
<dbReference type="Pfam" id="PF21202">
    <property type="entry name" value="SLX1_C"/>
    <property type="match status" value="1"/>
</dbReference>
<dbReference type="SUPFAM" id="SSF82771">
    <property type="entry name" value="GIY-YIG endonuclease"/>
    <property type="match status" value="1"/>
</dbReference>
<dbReference type="PROSITE" id="PS50164">
    <property type="entry name" value="GIY_YIG"/>
    <property type="match status" value="1"/>
</dbReference>
<comment type="function">
    <text evidence="1">Catalytic subunit of the SLX1-SLX4 structure-specific endonuclease that resolves DNA secondary structures generated during DNA repair and recombination. Has endonuclease activity towards branched DNA substrates, introducing single-strand cuts in duplex DNA close to junctions with ss-DNA.</text>
</comment>
<comment type="cofactor">
    <cofactor evidence="1">
        <name>a divalent metal cation</name>
        <dbReference type="ChEBI" id="CHEBI:60240"/>
    </cofactor>
</comment>
<comment type="subunit">
    <text evidence="1">Forms a heterodimer with SLX4.</text>
</comment>
<comment type="subcellular location">
    <subcellularLocation>
        <location evidence="1">Nucleus</location>
    </subcellularLocation>
</comment>
<comment type="similarity">
    <text evidence="1">Belongs to the SLX1 family.</text>
</comment>
<proteinExistence type="inferred from homology"/>
<keyword id="KW-0227">DNA damage</keyword>
<keyword id="KW-0233">DNA recombination</keyword>
<keyword id="KW-0234">DNA repair</keyword>
<keyword id="KW-0255">Endonuclease</keyword>
<keyword id="KW-0378">Hydrolase</keyword>
<keyword id="KW-0479">Metal-binding</keyword>
<keyword id="KW-0540">Nuclease</keyword>
<keyword id="KW-0539">Nucleus</keyword>
<keyword id="KW-1185">Reference proteome</keyword>
<keyword id="KW-0862">Zinc</keyword>
<keyword id="KW-0863">Zinc-finger</keyword>
<evidence type="ECO:0000255" key="1">
    <source>
        <dbReference type="HAMAP-Rule" id="MF_03100"/>
    </source>
</evidence>
<evidence type="ECO:0000256" key="2">
    <source>
        <dbReference type="SAM" id="MobiDB-lite"/>
    </source>
</evidence>
<name>SLX1_PARBD</name>
<reference key="1">
    <citation type="journal article" date="2011" name="PLoS Genet.">
        <title>Comparative genomic analysis of human fungal pathogens causing paracoccidioidomycosis.</title>
        <authorList>
            <person name="Desjardins C.A."/>
            <person name="Champion M.D."/>
            <person name="Holder J.W."/>
            <person name="Muszewska A."/>
            <person name="Goldberg J."/>
            <person name="Bailao A.M."/>
            <person name="Brigido M.M."/>
            <person name="Ferreira M.E."/>
            <person name="Garcia A.M."/>
            <person name="Grynberg M."/>
            <person name="Gujja S."/>
            <person name="Heiman D.I."/>
            <person name="Henn M.R."/>
            <person name="Kodira C.D."/>
            <person name="Leon-Narvaez H."/>
            <person name="Longo L.V.G."/>
            <person name="Ma L.-J."/>
            <person name="Malavazi I."/>
            <person name="Matsuo A.L."/>
            <person name="Morais F.V."/>
            <person name="Pereira M."/>
            <person name="Rodriguez-Brito S."/>
            <person name="Sakthikumar S."/>
            <person name="Salem-Izacc S.M."/>
            <person name="Sykes S.M."/>
            <person name="Teixeira M.M."/>
            <person name="Vallejo M.C."/>
            <person name="Walter M.E."/>
            <person name="Yandava C."/>
            <person name="Young S."/>
            <person name="Zeng Q."/>
            <person name="Zucker J."/>
            <person name="Felipe M.S."/>
            <person name="Goldman G.H."/>
            <person name="Haas B.J."/>
            <person name="McEwen J.G."/>
            <person name="Nino-Vega G."/>
            <person name="Puccia R."/>
            <person name="San-Blas G."/>
            <person name="Soares C.M."/>
            <person name="Birren B.W."/>
            <person name="Cuomo C.A."/>
        </authorList>
    </citation>
    <scope>NUCLEOTIDE SEQUENCE [LARGE SCALE GENOMIC DNA]</scope>
    <source>
        <strain>Pb18</strain>
    </source>
</reference>
<organism>
    <name type="scientific">Paracoccidioides brasiliensis (strain Pb18)</name>
    <dbReference type="NCBI Taxonomy" id="502780"/>
    <lineage>
        <taxon>Eukaryota</taxon>
        <taxon>Fungi</taxon>
        <taxon>Dikarya</taxon>
        <taxon>Ascomycota</taxon>
        <taxon>Pezizomycotina</taxon>
        <taxon>Eurotiomycetes</taxon>
        <taxon>Eurotiomycetidae</taxon>
        <taxon>Onygenales</taxon>
        <taxon>Ajellomycetaceae</taxon>
        <taxon>Paracoccidioides</taxon>
    </lineage>
</organism>
<feature type="chain" id="PRO_0000383791" description="Structure-specific endonuclease subunit SLX1">
    <location>
        <begin position="1"/>
        <end position="444"/>
    </location>
</feature>
<feature type="domain" description="GIY-YIG" evidence="1">
    <location>
        <begin position="23"/>
        <end position="105"/>
    </location>
</feature>
<feature type="zinc finger region" description="SLX1-type" evidence="1">
    <location>
        <begin position="240"/>
        <end position="295"/>
    </location>
</feature>
<feature type="region of interest" description="Disordered" evidence="2">
    <location>
        <begin position="323"/>
        <end position="355"/>
    </location>
</feature>
<feature type="region of interest" description="Disordered" evidence="2">
    <location>
        <begin position="386"/>
        <end position="444"/>
    </location>
</feature>
<gene>
    <name evidence="1" type="primary">SLX1</name>
    <name type="ORF">PADG_07531</name>
</gene>
<sequence length="444" mass="49581">MAPSIQSLSMIHDSQECIKPIPAFYCCYLLRSCVRHASLYIGSTPDPARRLAQHNGDRNGAAKRTLRENLRPWEMVAIVSGFTSRVAALQFEWAWQNTKVSRHADLDGNVIQELGVRICPRTGKGVKGTAKPRTSLTNILANLHLLLRSPYFSKWPVEVRFFSADVHRVWQVWLQRVDGLLNDGIRVVTDFALDGISEVERKELLAGAGRVGTLDVGYNSIKEYVEKSQFLLEDGERINCGVCKQRLILQHDIIAVCSHSSCHCAAHLSCLSSHFLKDKDSDSELIPREGTCPACYGKLEWLTMMKEISLRLRGQEEVNRLFRRRRQAGTPKGQGLKSVRGRGRGHSEDESDALQVSTGLDIVDLTPCSDDPWTIDCAIGELGGIAHRPGGESSGNDSDATITPEMETPPQRRRRNQNTRTQRLGLQKSATINLSDWDDAEVIE</sequence>
<accession>C1GJU5</accession>
<protein>
    <recommendedName>
        <fullName evidence="1">Structure-specific endonuclease subunit SLX1</fullName>
        <ecNumber evidence="1">3.1.-.-</ecNumber>
    </recommendedName>
</protein>